<reference key="1">
    <citation type="journal article" date="2009" name="Science">
        <title>The dynamics and time scale of ongoing genomic erosion in symbiotic bacteria.</title>
        <authorList>
            <person name="Moran N.A."/>
            <person name="McLaughlin H.J."/>
            <person name="Sorek R."/>
        </authorList>
    </citation>
    <scope>NUCLEOTIDE SEQUENCE [LARGE SCALE GENOMIC DNA]</scope>
    <source>
        <strain>Tuc7</strain>
    </source>
</reference>
<feature type="chain" id="PRO_1000146992" description="Protein Smg">
    <location>
        <begin position="1"/>
        <end position="157"/>
    </location>
</feature>
<comment type="similarity">
    <text evidence="1">Belongs to the Smg family.</text>
</comment>
<protein>
    <recommendedName>
        <fullName evidence="1">Protein Smg</fullName>
    </recommendedName>
</protein>
<gene>
    <name evidence="1" type="primary">smg</name>
    <name type="ordered locus">BUAPTUC7_489</name>
</gene>
<dbReference type="EMBL" id="CP001158">
    <property type="protein sequence ID" value="ACL30285.1"/>
    <property type="molecule type" value="Genomic_DNA"/>
</dbReference>
<dbReference type="RefSeq" id="WP_012619569.1">
    <property type="nucleotide sequence ID" value="NC_011834.1"/>
</dbReference>
<dbReference type="SMR" id="B8D820"/>
<dbReference type="KEGG" id="bau:BUAPTUC7_489"/>
<dbReference type="HOGENOM" id="CLU_133242_0_0_6"/>
<dbReference type="HAMAP" id="MF_00598">
    <property type="entry name" value="Smg"/>
    <property type="match status" value="1"/>
</dbReference>
<dbReference type="InterPro" id="IPR007456">
    <property type="entry name" value="Smg"/>
</dbReference>
<dbReference type="NCBIfam" id="NF002897">
    <property type="entry name" value="PRK03430.1"/>
    <property type="match status" value="1"/>
</dbReference>
<dbReference type="PANTHER" id="PTHR38692">
    <property type="entry name" value="PROTEIN SMG"/>
    <property type="match status" value="1"/>
</dbReference>
<dbReference type="PANTHER" id="PTHR38692:SF1">
    <property type="entry name" value="PROTEIN SMG"/>
    <property type="match status" value="1"/>
</dbReference>
<dbReference type="Pfam" id="PF04361">
    <property type="entry name" value="DUF494"/>
    <property type="match status" value="1"/>
</dbReference>
<name>SMG_BUCAT</name>
<organism>
    <name type="scientific">Buchnera aphidicola subsp. Acyrthosiphon pisum (strain Tuc7)</name>
    <dbReference type="NCBI Taxonomy" id="561501"/>
    <lineage>
        <taxon>Bacteria</taxon>
        <taxon>Pseudomonadati</taxon>
        <taxon>Pseudomonadota</taxon>
        <taxon>Gammaproteobacteria</taxon>
        <taxon>Enterobacterales</taxon>
        <taxon>Erwiniaceae</taxon>
        <taxon>Buchnera</taxon>
    </lineage>
</organism>
<proteinExistence type="inferred from homology"/>
<evidence type="ECO:0000255" key="1">
    <source>
        <dbReference type="HAMAP-Rule" id="MF_00598"/>
    </source>
</evidence>
<sequence>MFDILIYLFENYIHNESRISIDYDSLTNDLSDIGFQRRDIYNALSWLKNLSCYKKNIIPSINPLSNKITIRIYTQEESLKLNVDCRGFILFLEQLEILTLDTREVIIERIMELDINELNLEDLKWIVLIVLFNIPGCESAYHKLENLLFNFKEDIIH</sequence>
<accession>B8D820</accession>